<accession>Q3UU67</accession>
<accession>Q3SXD9</accession>
<accession>Q3SXE0</accession>
<comment type="function">
    <text evidence="1">Stabilizes the TCR (T-cell antigen receptor)/CD3 complex at the surface of T-cells.</text>
</comment>
<comment type="subunit">
    <text evidence="1">Homodimer; disulfide-linked. Interacts with CD3Z. When phosphorylated, interacts with PIK3R1 (By similarity).</text>
</comment>
<comment type="subcellular location">
    <subcellularLocation>
        <location evidence="1">Cell membrane</location>
        <topology evidence="1">Single-pass type III membrane protein</topology>
    </subcellularLocation>
</comment>
<comment type="alternative products">
    <event type="alternative splicing"/>
    <isoform>
        <id>Q3UU67-1</id>
        <name>1</name>
        <sequence type="displayed"/>
    </isoform>
    <isoform>
        <id>Q3UU67-2</id>
        <name>2</name>
        <sequence type="described" ref="VSP_016638 VSP_016640"/>
    </isoform>
    <isoform>
        <id>Q3UU67-3</id>
        <name>3</name>
        <name>DeltaTM-TRIM</name>
        <sequence type="described" ref="VSP_016639"/>
    </isoform>
</comment>
<comment type="tissue specificity">
    <text evidence="5">Present in T-cells (at protein level).</text>
</comment>
<comment type="developmental stage">
    <text evidence="5">Present in thymocytes from 16.5 dpc (at protein level).</text>
</comment>
<comment type="PTM">
    <text evidence="1">Phosphorylated on tyrosines upon TCR activation.</text>
</comment>
<comment type="miscellaneous">
    <molecule>Isoform 3</molecule>
    <text evidence="8">Strongly expressed at 13.5 dpc, then down-regulated. Marginal in adult. Protein may be unstable.</text>
</comment>
<comment type="sequence caution" evidence="8">
    <conflict type="erroneous initiation">
        <sequence resource="EMBL-CDS" id="AAI04352"/>
    </conflict>
</comment>
<organism>
    <name type="scientific">Mus musculus</name>
    <name type="common">Mouse</name>
    <dbReference type="NCBI Taxonomy" id="10090"/>
    <lineage>
        <taxon>Eukaryota</taxon>
        <taxon>Metazoa</taxon>
        <taxon>Chordata</taxon>
        <taxon>Craniata</taxon>
        <taxon>Vertebrata</taxon>
        <taxon>Euteleostomi</taxon>
        <taxon>Mammalia</taxon>
        <taxon>Eutheria</taxon>
        <taxon>Euarchontoglires</taxon>
        <taxon>Glires</taxon>
        <taxon>Rodentia</taxon>
        <taxon>Myomorpha</taxon>
        <taxon>Muroidea</taxon>
        <taxon>Muridae</taxon>
        <taxon>Murinae</taxon>
        <taxon>Mus</taxon>
        <taxon>Mus</taxon>
    </lineage>
</organism>
<reference key="1">
    <citation type="journal article" date="2001" name="Scand. J. Immunol.">
        <title>Developmentally regulated expression of the transmembrane adaptor protein TRIM in fetal and adult T cells.</title>
        <authorList>
            <person name="Huynh T."/>
            <person name="Wuerch A."/>
            <person name="Bruyns E."/>
            <person name="Korinek V."/>
            <person name="Schraven B."/>
            <person name="Eichmann K."/>
        </authorList>
    </citation>
    <scope>NUCLEOTIDE SEQUENCE [MRNA] (ISOFORMS 1 AND 3)</scope>
    <scope>TISSUE SPECIFICITY</scope>
    <scope>DEVELOPMENTAL STAGE</scope>
</reference>
<reference key="2">
    <citation type="journal article" date="2005" name="Science">
        <title>The transcriptional landscape of the mammalian genome.</title>
        <authorList>
            <person name="Carninci P."/>
            <person name="Kasukawa T."/>
            <person name="Katayama S."/>
            <person name="Gough J."/>
            <person name="Frith M.C."/>
            <person name="Maeda N."/>
            <person name="Oyama R."/>
            <person name="Ravasi T."/>
            <person name="Lenhard B."/>
            <person name="Wells C."/>
            <person name="Kodzius R."/>
            <person name="Shimokawa K."/>
            <person name="Bajic V.B."/>
            <person name="Brenner S.E."/>
            <person name="Batalov S."/>
            <person name="Forrest A.R."/>
            <person name="Zavolan M."/>
            <person name="Davis M.J."/>
            <person name="Wilming L.G."/>
            <person name="Aidinis V."/>
            <person name="Allen J.E."/>
            <person name="Ambesi-Impiombato A."/>
            <person name="Apweiler R."/>
            <person name="Aturaliya R.N."/>
            <person name="Bailey T.L."/>
            <person name="Bansal M."/>
            <person name="Baxter L."/>
            <person name="Beisel K.W."/>
            <person name="Bersano T."/>
            <person name="Bono H."/>
            <person name="Chalk A.M."/>
            <person name="Chiu K.P."/>
            <person name="Choudhary V."/>
            <person name="Christoffels A."/>
            <person name="Clutterbuck D.R."/>
            <person name="Crowe M.L."/>
            <person name="Dalla E."/>
            <person name="Dalrymple B.P."/>
            <person name="de Bono B."/>
            <person name="Della Gatta G."/>
            <person name="di Bernardo D."/>
            <person name="Down T."/>
            <person name="Engstrom P."/>
            <person name="Fagiolini M."/>
            <person name="Faulkner G."/>
            <person name="Fletcher C.F."/>
            <person name="Fukushima T."/>
            <person name="Furuno M."/>
            <person name="Futaki S."/>
            <person name="Gariboldi M."/>
            <person name="Georgii-Hemming P."/>
            <person name="Gingeras T.R."/>
            <person name="Gojobori T."/>
            <person name="Green R.E."/>
            <person name="Gustincich S."/>
            <person name="Harbers M."/>
            <person name="Hayashi Y."/>
            <person name="Hensch T.K."/>
            <person name="Hirokawa N."/>
            <person name="Hill D."/>
            <person name="Huminiecki L."/>
            <person name="Iacono M."/>
            <person name="Ikeo K."/>
            <person name="Iwama A."/>
            <person name="Ishikawa T."/>
            <person name="Jakt M."/>
            <person name="Kanapin A."/>
            <person name="Katoh M."/>
            <person name="Kawasawa Y."/>
            <person name="Kelso J."/>
            <person name="Kitamura H."/>
            <person name="Kitano H."/>
            <person name="Kollias G."/>
            <person name="Krishnan S.P."/>
            <person name="Kruger A."/>
            <person name="Kummerfeld S.K."/>
            <person name="Kurochkin I.V."/>
            <person name="Lareau L.F."/>
            <person name="Lazarevic D."/>
            <person name="Lipovich L."/>
            <person name="Liu J."/>
            <person name="Liuni S."/>
            <person name="McWilliam S."/>
            <person name="Madan Babu M."/>
            <person name="Madera M."/>
            <person name="Marchionni L."/>
            <person name="Matsuda H."/>
            <person name="Matsuzawa S."/>
            <person name="Miki H."/>
            <person name="Mignone F."/>
            <person name="Miyake S."/>
            <person name="Morris K."/>
            <person name="Mottagui-Tabar S."/>
            <person name="Mulder N."/>
            <person name="Nakano N."/>
            <person name="Nakauchi H."/>
            <person name="Ng P."/>
            <person name="Nilsson R."/>
            <person name="Nishiguchi S."/>
            <person name="Nishikawa S."/>
            <person name="Nori F."/>
            <person name="Ohara O."/>
            <person name="Okazaki Y."/>
            <person name="Orlando V."/>
            <person name="Pang K.C."/>
            <person name="Pavan W.J."/>
            <person name="Pavesi G."/>
            <person name="Pesole G."/>
            <person name="Petrovsky N."/>
            <person name="Piazza S."/>
            <person name="Reed J."/>
            <person name="Reid J.F."/>
            <person name="Ring B.Z."/>
            <person name="Ringwald M."/>
            <person name="Rost B."/>
            <person name="Ruan Y."/>
            <person name="Salzberg S.L."/>
            <person name="Sandelin A."/>
            <person name="Schneider C."/>
            <person name="Schoenbach C."/>
            <person name="Sekiguchi K."/>
            <person name="Semple C.A."/>
            <person name="Seno S."/>
            <person name="Sessa L."/>
            <person name="Sheng Y."/>
            <person name="Shibata Y."/>
            <person name="Shimada H."/>
            <person name="Shimada K."/>
            <person name="Silva D."/>
            <person name="Sinclair B."/>
            <person name="Sperling S."/>
            <person name="Stupka E."/>
            <person name="Sugiura K."/>
            <person name="Sultana R."/>
            <person name="Takenaka Y."/>
            <person name="Taki K."/>
            <person name="Tammoja K."/>
            <person name="Tan S.L."/>
            <person name="Tang S."/>
            <person name="Taylor M.S."/>
            <person name="Tegner J."/>
            <person name="Teichmann S.A."/>
            <person name="Ueda H.R."/>
            <person name="van Nimwegen E."/>
            <person name="Verardo R."/>
            <person name="Wei C.L."/>
            <person name="Yagi K."/>
            <person name="Yamanishi H."/>
            <person name="Zabarovsky E."/>
            <person name="Zhu S."/>
            <person name="Zimmer A."/>
            <person name="Hide W."/>
            <person name="Bult C."/>
            <person name="Grimmond S.M."/>
            <person name="Teasdale R.D."/>
            <person name="Liu E.T."/>
            <person name="Brusic V."/>
            <person name="Quackenbush J."/>
            <person name="Wahlestedt C."/>
            <person name="Mattick J.S."/>
            <person name="Hume D.A."/>
            <person name="Kai C."/>
            <person name="Sasaki D."/>
            <person name="Tomaru Y."/>
            <person name="Fukuda S."/>
            <person name="Kanamori-Katayama M."/>
            <person name="Suzuki M."/>
            <person name="Aoki J."/>
            <person name="Arakawa T."/>
            <person name="Iida J."/>
            <person name="Imamura K."/>
            <person name="Itoh M."/>
            <person name="Kato T."/>
            <person name="Kawaji H."/>
            <person name="Kawagashira N."/>
            <person name="Kawashima T."/>
            <person name="Kojima M."/>
            <person name="Kondo S."/>
            <person name="Konno H."/>
            <person name="Nakano K."/>
            <person name="Ninomiya N."/>
            <person name="Nishio T."/>
            <person name="Okada M."/>
            <person name="Plessy C."/>
            <person name="Shibata K."/>
            <person name="Shiraki T."/>
            <person name="Suzuki S."/>
            <person name="Tagami M."/>
            <person name="Waki K."/>
            <person name="Watahiki A."/>
            <person name="Okamura-Oho Y."/>
            <person name="Suzuki H."/>
            <person name="Kawai J."/>
            <person name="Hayashizaki Y."/>
        </authorList>
    </citation>
    <scope>NUCLEOTIDE SEQUENCE [LARGE SCALE MRNA] (ISOFORM 1)</scope>
    <source>
        <strain>C57BL/6J</strain>
        <tissue>Thymus</tissue>
    </source>
</reference>
<reference key="3">
    <citation type="journal article" date="2004" name="Genome Res.">
        <title>The status, quality, and expansion of the NIH full-length cDNA project: the Mammalian Gene Collection (MGC).</title>
        <authorList>
            <consortium name="The MGC Project Team"/>
        </authorList>
    </citation>
    <scope>NUCLEOTIDE SEQUENCE [LARGE SCALE MRNA] (ISOFORMS 1 AND 2)</scope>
</reference>
<reference key="4">
    <citation type="journal article" date="2010" name="Cell">
        <title>A tissue-specific atlas of mouse protein phosphorylation and expression.</title>
        <authorList>
            <person name="Huttlin E.L."/>
            <person name="Jedrychowski M.P."/>
            <person name="Elias J.E."/>
            <person name="Goswami T."/>
            <person name="Rad R."/>
            <person name="Beausoleil S.A."/>
            <person name="Villen J."/>
            <person name="Haas W."/>
            <person name="Sowa M.E."/>
            <person name="Gygi S.P."/>
        </authorList>
    </citation>
    <scope>PHOSPHORYLATION [LARGE SCALE ANALYSIS] AT SER-46</scope>
    <scope>IDENTIFICATION BY MASS SPECTROMETRY [LARGE SCALE ANALYSIS]</scope>
    <source>
        <tissue>Lung</tissue>
    </source>
</reference>
<protein>
    <recommendedName>
        <fullName>T-cell receptor-associated transmembrane adapter 1</fullName>
    </recommendedName>
    <alternativeName>
        <fullName>T-cell receptor-interacting molecule</fullName>
        <shortName>TRIM</shortName>
    </alternativeName>
</protein>
<proteinExistence type="evidence at protein level"/>
<gene>
    <name type="primary">Trat1</name>
</gene>
<feature type="chain" id="PRO_0000083345" description="T-cell receptor-associated transmembrane adapter 1">
    <location>
        <begin position="1"/>
        <end position="187"/>
    </location>
</feature>
<feature type="topological domain" description="Extracellular" evidence="3">
    <location>
        <begin position="1"/>
        <end position="7"/>
    </location>
</feature>
<feature type="transmembrane region" description="Helical; Signal-anchor for type III membrane protein" evidence="3">
    <location>
        <begin position="8"/>
        <end position="28"/>
    </location>
</feature>
<feature type="topological domain" description="Cytoplasmic" evidence="3">
    <location>
        <begin position="29"/>
        <end position="187"/>
    </location>
</feature>
<feature type="region of interest" description="Interaction with PIK3R1" evidence="1">
    <location>
        <begin position="80"/>
        <end position="83"/>
    </location>
</feature>
<feature type="region of interest" description="Disordered" evidence="4">
    <location>
        <begin position="117"/>
        <end position="138"/>
    </location>
</feature>
<feature type="modified residue" description="Phosphoserine" evidence="9">
    <location>
        <position position="46"/>
    </location>
</feature>
<feature type="modified residue" description="Phosphotyrosine" evidence="2">
    <location>
        <position position="80"/>
    </location>
</feature>
<feature type="disulfide bond" description="Interchain" evidence="1">
    <location>
        <position position="7"/>
    </location>
</feature>
<feature type="splice variant" id="VSP_016638" description="In isoform 2." evidence="7">
    <location>
        <begin position="1"/>
        <end position="18"/>
    </location>
</feature>
<feature type="splice variant" id="VSP_016639" description="In isoform 3." evidence="6">
    <location>
        <begin position="3"/>
        <end position="39"/>
    </location>
</feature>
<feature type="splice variant" id="VSP_016640" description="In isoform 2." evidence="7">
    <original>GLALVISLIFNISHYVEKQRRDEIYRYSDDYIP</original>
    <variation>MPLLPLGTSSLLGLGSGYIVDLQYFPLCREAET</variation>
    <location>
        <begin position="19"/>
        <end position="51"/>
    </location>
</feature>
<keyword id="KW-1064">Adaptive immunity</keyword>
<keyword id="KW-0025">Alternative splicing</keyword>
<keyword id="KW-1003">Cell membrane</keyword>
<keyword id="KW-1015">Disulfide bond</keyword>
<keyword id="KW-0391">Immunity</keyword>
<keyword id="KW-0472">Membrane</keyword>
<keyword id="KW-0597">Phosphoprotein</keyword>
<keyword id="KW-1185">Reference proteome</keyword>
<keyword id="KW-0735">Signal-anchor</keyword>
<keyword id="KW-0812">Transmembrane</keyword>
<keyword id="KW-1133">Transmembrane helix</keyword>
<evidence type="ECO:0000250" key="1"/>
<evidence type="ECO:0000250" key="2">
    <source>
        <dbReference type="UniProtKB" id="Q6PIZ9"/>
    </source>
</evidence>
<evidence type="ECO:0000255" key="3"/>
<evidence type="ECO:0000256" key="4">
    <source>
        <dbReference type="SAM" id="MobiDB-lite"/>
    </source>
</evidence>
<evidence type="ECO:0000269" key="5">
    <source>
    </source>
</evidence>
<evidence type="ECO:0000303" key="6">
    <source>
    </source>
</evidence>
<evidence type="ECO:0000303" key="7">
    <source>
    </source>
</evidence>
<evidence type="ECO:0000305" key="8"/>
<evidence type="ECO:0007744" key="9">
    <source>
    </source>
</evidence>
<sequence length="187" mass="21330">MSGSSGCPFFLWGLLAFLGLALVISLIFNISHYVEKQRRDEIYRYSDDYIPRVDEYYVEDAPIYGNLENIIPEPLDENCYEQMKGRPQRSASDPQEVAAPAQVPAEAQMCYASLDHSVKGKRRRPRKQNTNVSDRGKDTQVYTMDANVSQINMVESFPPDNQVVEESIHDDPARLFGLIRAKREPVI</sequence>
<name>TRAT1_MOUSE</name>
<dbReference type="EMBL" id="AK138735">
    <property type="protein sequence ID" value="BAE23761.1"/>
    <property type="molecule type" value="mRNA"/>
</dbReference>
<dbReference type="EMBL" id="BC104350">
    <property type="protein sequence ID" value="AAI04351.1"/>
    <property type="molecule type" value="mRNA"/>
</dbReference>
<dbReference type="EMBL" id="BC104351">
    <property type="protein sequence ID" value="AAI04352.2"/>
    <property type="status" value="ALT_INIT"/>
    <property type="molecule type" value="mRNA"/>
</dbReference>
<dbReference type="CCDS" id="CCDS37352.1">
    <molecule id="Q3UU67-1"/>
</dbReference>
<dbReference type="RefSeq" id="NP_938039.3">
    <molecule id="Q3UU67-1"/>
    <property type="nucleotide sequence ID" value="NM_198297.4"/>
</dbReference>
<dbReference type="RefSeq" id="XP_006522795.1">
    <molecule id="Q3UU67-2"/>
    <property type="nucleotide sequence ID" value="XM_006522732.3"/>
</dbReference>
<dbReference type="CORUM" id="Q3UU67"/>
<dbReference type="FunCoup" id="Q3UU67">
    <property type="interactions" value="20"/>
</dbReference>
<dbReference type="STRING" id="10090.ENSMUSP00000155986"/>
<dbReference type="iPTMnet" id="Q3UU67"/>
<dbReference type="PhosphoSitePlus" id="Q3UU67"/>
<dbReference type="jPOST" id="Q3UU67"/>
<dbReference type="PaxDb" id="10090-ENSMUSP00000129808"/>
<dbReference type="ProteomicsDB" id="259303">
    <molecule id="Q3UU67-1"/>
</dbReference>
<dbReference type="ProteomicsDB" id="259304">
    <molecule id="Q3UU67-2"/>
</dbReference>
<dbReference type="ProteomicsDB" id="259305">
    <molecule id="Q3UU67-3"/>
</dbReference>
<dbReference type="Antibodypedia" id="1192">
    <property type="antibodies" value="257 antibodies from 30 providers"/>
</dbReference>
<dbReference type="DNASU" id="77647"/>
<dbReference type="Ensembl" id="ENSMUST00000231701.3">
    <molecule id="Q3UU67-1"/>
    <property type="protein sequence ID" value="ENSMUSP00000155986.3"/>
    <property type="gene ID" value="ENSMUSG00000030775.12"/>
</dbReference>
<dbReference type="GeneID" id="77647"/>
<dbReference type="KEGG" id="mmu:77647"/>
<dbReference type="UCSC" id="uc007zjr.1">
    <molecule id="Q3UU67-1"/>
    <property type="organism name" value="mouse"/>
</dbReference>
<dbReference type="UCSC" id="uc007zjs.1">
    <molecule id="Q3UU67-2"/>
    <property type="organism name" value="mouse"/>
</dbReference>
<dbReference type="AGR" id="MGI:1924897"/>
<dbReference type="CTD" id="50852"/>
<dbReference type="MGI" id="MGI:1924897">
    <property type="gene designation" value="Trat1"/>
</dbReference>
<dbReference type="VEuPathDB" id="HostDB:ENSMUSG00000030775"/>
<dbReference type="eggNOG" id="ENOG502S7P1">
    <property type="taxonomic scope" value="Eukaryota"/>
</dbReference>
<dbReference type="GeneTree" id="ENSGT00390000004910"/>
<dbReference type="InParanoid" id="Q3UU67"/>
<dbReference type="OrthoDB" id="8952491at2759"/>
<dbReference type="PhylomeDB" id="Q3UU67"/>
<dbReference type="TreeFam" id="TF336066"/>
<dbReference type="Reactome" id="R-MMU-1257604">
    <property type="pathway name" value="PIP3 activates AKT signaling"/>
</dbReference>
<dbReference type="Reactome" id="R-MMU-202424">
    <property type="pathway name" value="Downstream TCR signaling"/>
</dbReference>
<dbReference type="Reactome" id="R-MMU-6811558">
    <property type="pathway name" value="PI5P, PP2A and IER3 Regulate PI3K/AKT Signaling"/>
</dbReference>
<dbReference type="BioGRID-ORCS" id="77647">
    <property type="hits" value="3 hits in 75 CRISPR screens"/>
</dbReference>
<dbReference type="PRO" id="PR:Q3UU67"/>
<dbReference type="Proteomes" id="UP000000589">
    <property type="component" value="Chromosome 16"/>
</dbReference>
<dbReference type="RNAct" id="Q3UU67">
    <property type="molecule type" value="protein"/>
</dbReference>
<dbReference type="Bgee" id="ENSMUSG00000030775">
    <property type="expression patterns" value="Expressed in thymus and 42 other cell types or tissues"/>
</dbReference>
<dbReference type="ExpressionAtlas" id="Q3UU67">
    <property type="expression patterns" value="baseline and differential"/>
</dbReference>
<dbReference type="GO" id="GO:0034451">
    <property type="term" value="C:centriolar satellite"/>
    <property type="evidence" value="ECO:0007669"/>
    <property type="project" value="Ensembl"/>
</dbReference>
<dbReference type="GO" id="GO:0072686">
    <property type="term" value="C:mitotic spindle"/>
    <property type="evidence" value="ECO:0007669"/>
    <property type="project" value="Ensembl"/>
</dbReference>
<dbReference type="GO" id="GO:0005886">
    <property type="term" value="C:plasma membrane"/>
    <property type="evidence" value="ECO:0000266"/>
    <property type="project" value="MGI"/>
</dbReference>
<dbReference type="GO" id="GO:0042101">
    <property type="term" value="C:T cell receptor complex"/>
    <property type="evidence" value="ECO:0000266"/>
    <property type="project" value="MGI"/>
</dbReference>
<dbReference type="GO" id="GO:0002250">
    <property type="term" value="P:adaptive immune response"/>
    <property type="evidence" value="ECO:0007669"/>
    <property type="project" value="UniProtKB-KW"/>
</dbReference>
<dbReference type="GO" id="GO:0001920">
    <property type="term" value="P:negative regulation of receptor recycling"/>
    <property type="evidence" value="ECO:0000266"/>
    <property type="project" value="MGI"/>
</dbReference>
<dbReference type="GO" id="GO:0051051">
    <property type="term" value="P:negative regulation of transport"/>
    <property type="evidence" value="ECO:0000266"/>
    <property type="project" value="MGI"/>
</dbReference>
<dbReference type="GO" id="GO:0050850">
    <property type="term" value="P:positive regulation of calcium-mediated signaling"/>
    <property type="evidence" value="ECO:0000266"/>
    <property type="project" value="MGI"/>
</dbReference>
<dbReference type="GO" id="GO:0050862">
    <property type="term" value="P:positive regulation of T cell receptor signaling pathway"/>
    <property type="evidence" value="ECO:0000266"/>
    <property type="project" value="MGI"/>
</dbReference>
<dbReference type="InterPro" id="IPR020399">
    <property type="entry name" value="T-cell_rcpt-assoc_TM_adapter-1"/>
</dbReference>
<dbReference type="PANTHER" id="PTHR15951">
    <property type="entry name" value="T-CELL RECEPTOR-ASSOCIATED TRANSMEMBRANE ADAPTER 1"/>
    <property type="match status" value="1"/>
</dbReference>
<dbReference type="PANTHER" id="PTHR15951:SF2">
    <property type="entry name" value="T-CELL RECEPTOR-ASSOCIATED TRANSMEMBRANE ADAPTER 1"/>
    <property type="match status" value="1"/>
</dbReference>
<dbReference type="Pfam" id="PF15330">
    <property type="entry name" value="SIT"/>
    <property type="match status" value="1"/>
</dbReference>